<reference key="1">
    <citation type="journal article" date="2004" name="Nat. Biotechnol.">
        <title>The genome sequence of the capnophilic rumen bacterium Mannheimia succiniciproducens.</title>
        <authorList>
            <person name="Hong S.H."/>
            <person name="Kim J.S."/>
            <person name="Lee S.Y."/>
            <person name="In Y.H."/>
            <person name="Choi S.S."/>
            <person name="Rih J.-K."/>
            <person name="Kim C.H."/>
            <person name="Jeong H."/>
            <person name="Hur C.G."/>
            <person name="Kim J.J."/>
        </authorList>
    </citation>
    <scope>NUCLEOTIDE SEQUENCE [LARGE SCALE GENOMIC DNA]</scope>
    <source>
        <strain>KCTC 0769BP / MBEL55E</strain>
    </source>
</reference>
<sequence length="363" mass="40321">MHLSDFYFDLPDELIARYPKPERSSSRLLRLSGENGDISHHTFSDVYDLINEGDLLIFNNTRVIPARMYGRKASGGKIEVLIERVLTESRFLAHVRSSKAPKAGTELILGEDKLGEGKGVKAVMIGRQDALFELEITEKSTALLDILQKIGHMPLPPYIDRPDEDADQERYQTVYSKIPGAVAAPTAGLHFDEELLAKLKAKGVNFAFVTLHVGAGTFQPVRVNNIEEHHMHAEYVEVPQQVVDAIVATKAAGKRVIAVGTTSVRSVESAALAAQEKGFAQIIEPFFADTSIFIYPGKQFRVVDCLITNFHLPESTLIMLVSAFAGYKNTMNAYKSAVENRYRFFSYGDAMFITKNNHVKGLD</sequence>
<dbReference type="EC" id="2.4.99.17" evidence="1"/>
<dbReference type="EMBL" id="AE016827">
    <property type="protein sequence ID" value="AAU38165.1"/>
    <property type="molecule type" value="Genomic_DNA"/>
</dbReference>
<dbReference type="RefSeq" id="WP_011200730.1">
    <property type="nucleotide sequence ID" value="NC_006300.1"/>
</dbReference>
<dbReference type="SMR" id="Q65S95"/>
<dbReference type="STRING" id="221988.MS1558"/>
<dbReference type="KEGG" id="msu:MS1558"/>
<dbReference type="eggNOG" id="COG0809">
    <property type="taxonomic scope" value="Bacteria"/>
</dbReference>
<dbReference type="HOGENOM" id="CLU_039110_1_0_6"/>
<dbReference type="OrthoDB" id="9805933at2"/>
<dbReference type="UniPathway" id="UPA00392"/>
<dbReference type="Proteomes" id="UP000000607">
    <property type="component" value="Chromosome"/>
</dbReference>
<dbReference type="GO" id="GO:0005737">
    <property type="term" value="C:cytoplasm"/>
    <property type="evidence" value="ECO:0007669"/>
    <property type="project" value="UniProtKB-SubCell"/>
</dbReference>
<dbReference type="GO" id="GO:0051075">
    <property type="term" value="F:S-adenosylmethionine:tRNA ribosyltransferase-isomerase activity"/>
    <property type="evidence" value="ECO:0007669"/>
    <property type="project" value="UniProtKB-EC"/>
</dbReference>
<dbReference type="GO" id="GO:0008616">
    <property type="term" value="P:queuosine biosynthetic process"/>
    <property type="evidence" value="ECO:0007669"/>
    <property type="project" value="UniProtKB-UniRule"/>
</dbReference>
<dbReference type="GO" id="GO:0002099">
    <property type="term" value="P:tRNA wobble guanine modification"/>
    <property type="evidence" value="ECO:0007669"/>
    <property type="project" value="TreeGrafter"/>
</dbReference>
<dbReference type="FunFam" id="2.40.10.240:FF:000001">
    <property type="entry name" value="S-adenosylmethionine:tRNA ribosyltransferase-isomerase"/>
    <property type="match status" value="1"/>
</dbReference>
<dbReference type="FunFam" id="3.40.1780.10:FF:000001">
    <property type="entry name" value="S-adenosylmethionine:tRNA ribosyltransferase-isomerase"/>
    <property type="match status" value="1"/>
</dbReference>
<dbReference type="Gene3D" id="2.40.10.240">
    <property type="entry name" value="QueA-like"/>
    <property type="match status" value="1"/>
</dbReference>
<dbReference type="Gene3D" id="3.40.1780.10">
    <property type="entry name" value="QueA-like"/>
    <property type="match status" value="1"/>
</dbReference>
<dbReference type="HAMAP" id="MF_00113">
    <property type="entry name" value="QueA"/>
    <property type="match status" value="1"/>
</dbReference>
<dbReference type="InterPro" id="IPR003699">
    <property type="entry name" value="QueA"/>
</dbReference>
<dbReference type="InterPro" id="IPR042118">
    <property type="entry name" value="QueA_dom1"/>
</dbReference>
<dbReference type="InterPro" id="IPR042119">
    <property type="entry name" value="QueA_dom2"/>
</dbReference>
<dbReference type="InterPro" id="IPR036100">
    <property type="entry name" value="QueA_sf"/>
</dbReference>
<dbReference type="NCBIfam" id="NF001140">
    <property type="entry name" value="PRK00147.1"/>
    <property type="match status" value="1"/>
</dbReference>
<dbReference type="NCBIfam" id="TIGR00113">
    <property type="entry name" value="queA"/>
    <property type="match status" value="1"/>
</dbReference>
<dbReference type="PANTHER" id="PTHR30307">
    <property type="entry name" value="S-ADENOSYLMETHIONINE:TRNA RIBOSYLTRANSFERASE-ISOMERASE"/>
    <property type="match status" value="1"/>
</dbReference>
<dbReference type="PANTHER" id="PTHR30307:SF0">
    <property type="entry name" value="S-ADENOSYLMETHIONINE:TRNA RIBOSYLTRANSFERASE-ISOMERASE"/>
    <property type="match status" value="1"/>
</dbReference>
<dbReference type="Pfam" id="PF02547">
    <property type="entry name" value="Queuosine_synth"/>
    <property type="match status" value="1"/>
</dbReference>
<dbReference type="SUPFAM" id="SSF111337">
    <property type="entry name" value="QueA-like"/>
    <property type="match status" value="1"/>
</dbReference>
<evidence type="ECO:0000255" key="1">
    <source>
        <dbReference type="HAMAP-Rule" id="MF_00113"/>
    </source>
</evidence>
<gene>
    <name evidence="1" type="primary">queA</name>
    <name type="ordered locus">MS1558</name>
</gene>
<name>QUEA_MANSM</name>
<protein>
    <recommendedName>
        <fullName evidence="1">S-adenosylmethionine:tRNA ribosyltransferase-isomerase</fullName>
        <ecNumber evidence="1">2.4.99.17</ecNumber>
    </recommendedName>
    <alternativeName>
        <fullName evidence="1">Queuosine biosynthesis protein QueA</fullName>
    </alternativeName>
</protein>
<organism>
    <name type="scientific">Mannheimia succiniciproducens (strain KCTC 0769BP / MBEL55E)</name>
    <dbReference type="NCBI Taxonomy" id="221988"/>
    <lineage>
        <taxon>Bacteria</taxon>
        <taxon>Pseudomonadati</taxon>
        <taxon>Pseudomonadota</taxon>
        <taxon>Gammaproteobacteria</taxon>
        <taxon>Pasteurellales</taxon>
        <taxon>Pasteurellaceae</taxon>
        <taxon>Basfia</taxon>
    </lineage>
</organism>
<keyword id="KW-0963">Cytoplasm</keyword>
<keyword id="KW-0671">Queuosine biosynthesis</keyword>
<keyword id="KW-0949">S-adenosyl-L-methionine</keyword>
<keyword id="KW-0808">Transferase</keyword>
<comment type="function">
    <text evidence="1">Transfers and isomerizes the ribose moiety from AdoMet to the 7-aminomethyl group of 7-deazaguanine (preQ1-tRNA) to give epoxyqueuosine (oQ-tRNA).</text>
</comment>
<comment type="catalytic activity">
    <reaction evidence="1">
        <text>7-aminomethyl-7-carbaguanosine(34) in tRNA + S-adenosyl-L-methionine = epoxyqueuosine(34) in tRNA + adenine + L-methionine + 2 H(+)</text>
        <dbReference type="Rhea" id="RHEA:32155"/>
        <dbReference type="Rhea" id="RHEA-COMP:10342"/>
        <dbReference type="Rhea" id="RHEA-COMP:18582"/>
        <dbReference type="ChEBI" id="CHEBI:15378"/>
        <dbReference type="ChEBI" id="CHEBI:16708"/>
        <dbReference type="ChEBI" id="CHEBI:57844"/>
        <dbReference type="ChEBI" id="CHEBI:59789"/>
        <dbReference type="ChEBI" id="CHEBI:82833"/>
        <dbReference type="ChEBI" id="CHEBI:194443"/>
        <dbReference type="EC" id="2.4.99.17"/>
    </reaction>
</comment>
<comment type="pathway">
    <text evidence="1">tRNA modification; tRNA-queuosine biosynthesis.</text>
</comment>
<comment type="subunit">
    <text evidence="1">Monomer.</text>
</comment>
<comment type="subcellular location">
    <subcellularLocation>
        <location evidence="1">Cytoplasm</location>
    </subcellularLocation>
</comment>
<comment type="similarity">
    <text evidence="1">Belongs to the QueA family.</text>
</comment>
<accession>Q65S95</accession>
<proteinExistence type="inferred from homology"/>
<feature type="chain" id="PRO_0000231348" description="S-adenosylmethionine:tRNA ribosyltransferase-isomerase">
    <location>
        <begin position="1"/>
        <end position="363"/>
    </location>
</feature>